<organism>
    <name type="scientific">Mycobacterium tuberculosis (strain CDC 1551 / Oshkosh)</name>
    <dbReference type="NCBI Taxonomy" id="83331"/>
    <lineage>
        <taxon>Bacteria</taxon>
        <taxon>Bacillati</taxon>
        <taxon>Actinomycetota</taxon>
        <taxon>Actinomycetes</taxon>
        <taxon>Mycobacteriales</taxon>
        <taxon>Mycobacteriaceae</taxon>
        <taxon>Mycobacterium</taxon>
        <taxon>Mycobacterium tuberculosis complex</taxon>
    </lineage>
</organism>
<protein>
    <recommendedName>
        <fullName>Probable doxorubicin resistance ABC transporter permease protein DrrC</fullName>
    </recommendedName>
</protein>
<dbReference type="EMBL" id="AE000516">
    <property type="protein sequence ID" value="AAK47335.1"/>
    <property type="molecule type" value="Genomic_DNA"/>
</dbReference>
<dbReference type="PIR" id="F70984">
    <property type="entry name" value="F70984"/>
</dbReference>
<dbReference type="RefSeq" id="WP_003414851.1">
    <property type="nucleotide sequence ID" value="NZ_KK341227.1"/>
</dbReference>
<dbReference type="KEGG" id="mtc:MT3008"/>
<dbReference type="PATRIC" id="fig|83331.31.peg.3248"/>
<dbReference type="HOGENOM" id="CLU_039483_2_1_11"/>
<dbReference type="Proteomes" id="UP000001020">
    <property type="component" value="Chromosome"/>
</dbReference>
<dbReference type="GO" id="GO:0043190">
    <property type="term" value="C:ATP-binding cassette (ABC) transporter complex"/>
    <property type="evidence" value="ECO:0007669"/>
    <property type="project" value="InterPro"/>
</dbReference>
<dbReference type="GO" id="GO:0140359">
    <property type="term" value="F:ABC-type transporter activity"/>
    <property type="evidence" value="ECO:0007669"/>
    <property type="project" value="InterPro"/>
</dbReference>
<dbReference type="GO" id="GO:0043215">
    <property type="term" value="P:daunorubicin transport"/>
    <property type="evidence" value="ECO:0007669"/>
    <property type="project" value="InterPro"/>
</dbReference>
<dbReference type="GO" id="GO:1900753">
    <property type="term" value="P:doxorubicin transport"/>
    <property type="evidence" value="ECO:0007669"/>
    <property type="project" value="InterPro"/>
</dbReference>
<dbReference type="GO" id="GO:0046677">
    <property type="term" value="P:response to antibiotic"/>
    <property type="evidence" value="ECO:0007669"/>
    <property type="project" value="UniProtKB-KW"/>
</dbReference>
<dbReference type="InterPro" id="IPR052902">
    <property type="entry name" value="ABC-2_transporter"/>
</dbReference>
<dbReference type="InterPro" id="IPR013525">
    <property type="entry name" value="ABC2_TM"/>
</dbReference>
<dbReference type="InterPro" id="IPR047817">
    <property type="entry name" value="ABC2_TM_bact-type"/>
</dbReference>
<dbReference type="InterPro" id="IPR000412">
    <property type="entry name" value="ABC_2_transport"/>
</dbReference>
<dbReference type="InterPro" id="IPR004377">
    <property type="entry name" value="ABC_transpt_DrrB/DrrC"/>
</dbReference>
<dbReference type="InterPro" id="IPR005943">
    <property type="entry name" value="Daunbcin-R_C"/>
</dbReference>
<dbReference type="NCBIfam" id="TIGR01248">
    <property type="entry name" value="drrC"/>
    <property type="match status" value="1"/>
</dbReference>
<dbReference type="NCBIfam" id="TIGR00025">
    <property type="entry name" value="Mtu_efflux"/>
    <property type="match status" value="1"/>
</dbReference>
<dbReference type="PANTHER" id="PTHR43027">
    <property type="entry name" value="DOXORUBICIN RESISTANCE ABC TRANSPORTER PERMEASE PROTEIN DRRC-RELATED"/>
    <property type="match status" value="1"/>
</dbReference>
<dbReference type="PANTHER" id="PTHR43027:SF1">
    <property type="entry name" value="DOXORUBICIN RESISTANCE ABC TRANSPORTER PERMEASE PROTEIN DRRC-RELATED"/>
    <property type="match status" value="1"/>
</dbReference>
<dbReference type="Pfam" id="PF01061">
    <property type="entry name" value="ABC2_membrane"/>
    <property type="match status" value="1"/>
</dbReference>
<dbReference type="PIRSF" id="PIRSF006648">
    <property type="entry name" value="DrrB"/>
    <property type="match status" value="1"/>
</dbReference>
<dbReference type="PROSITE" id="PS51012">
    <property type="entry name" value="ABC_TM2"/>
    <property type="match status" value="1"/>
</dbReference>
<gene>
    <name type="primary">drrC</name>
    <name type="ordered locus">MT3008</name>
</gene>
<evidence type="ECO:0000250" key="1"/>
<evidence type="ECO:0000255" key="2"/>
<evidence type="ECO:0000255" key="3">
    <source>
        <dbReference type="PROSITE-ProRule" id="PRU00442"/>
    </source>
</evidence>
<evidence type="ECO:0000305" key="4"/>
<proteinExistence type="inferred from homology"/>
<keyword id="KW-0046">Antibiotic resistance</keyword>
<keyword id="KW-1003">Cell membrane</keyword>
<keyword id="KW-0472">Membrane</keyword>
<keyword id="KW-1185">Reference proteome</keyword>
<keyword id="KW-0812">Transmembrane</keyword>
<keyword id="KW-1133">Transmembrane helix</keyword>
<keyword id="KW-0813">Transport</keyword>
<reference key="1">
    <citation type="journal article" date="2002" name="J. Bacteriol.">
        <title>Whole-genome comparison of Mycobacterium tuberculosis clinical and laboratory strains.</title>
        <authorList>
            <person name="Fleischmann R.D."/>
            <person name="Alland D."/>
            <person name="Eisen J.A."/>
            <person name="Carpenter L."/>
            <person name="White O."/>
            <person name="Peterson J.D."/>
            <person name="DeBoy R.T."/>
            <person name="Dodson R.J."/>
            <person name="Gwinn M.L."/>
            <person name="Haft D.H."/>
            <person name="Hickey E.K."/>
            <person name="Kolonay J.F."/>
            <person name="Nelson W.C."/>
            <person name="Umayam L.A."/>
            <person name="Ermolaeva M.D."/>
            <person name="Salzberg S.L."/>
            <person name="Delcher A."/>
            <person name="Utterback T.R."/>
            <person name="Weidman J.F."/>
            <person name="Khouri H.M."/>
            <person name="Gill J."/>
            <person name="Mikula A."/>
            <person name="Bishai W."/>
            <person name="Jacobs W.R. Jr."/>
            <person name="Venter J.C."/>
            <person name="Fraser C.M."/>
        </authorList>
    </citation>
    <scope>NUCLEOTIDE SEQUENCE [LARGE SCALE GENOMIC DNA]</scope>
    <source>
        <strain>CDC 1551 / Oshkosh</strain>
    </source>
</reference>
<sequence>MITTTSQEIELAPTRLPGSQNAARLFVAQTLLQTNRLLTRWARDYITVIGAIVLPILFMVVLNIVLGNLAYVVTHDSGLYSIVPLIALGAAITGSTFVAIDLMRERSFGLLARLWVLPVHRASGLISRILANAIRTLVTTLVMLGTGVVLGFRFRQGLIPSLMWISVPVILGIAIAAMVTTVALYTAQTVVVEGVELVQAIAIFFSTGLVPLNSYPGWIQPFVAHQPVSYAIAAMRGFAMGGPVLSPMIGMLVWTAGICVVCAVPLAIGYRRASTH</sequence>
<comment type="function">
    <text evidence="1">Probably part of the ABC transporter complex DrrABC involved in doxorubicin resistance. Probably responsible for the translocation of the substrate across the membrane (By similarity).</text>
</comment>
<comment type="subunit">
    <text evidence="4">The complex is composed of two ATP-binding proteins (DrrA) and two transmembrane proteins (DrrB and DrrC).</text>
</comment>
<comment type="subcellular location">
    <subcellularLocation>
        <location evidence="4">Cell membrane</location>
        <topology evidence="4">Multi-pass membrane protein</topology>
    </subcellularLocation>
</comment>
<comment type="similarity">
    <text evidence="4">Belongs to the ABC-2 integral membrane protein family.</text>
</comment>
<feature type="chain" id="PRO_0000428438" description="Probable doxorubicin resistance ABC transporter permease protein DrrC">
    <location>
        <begin position="1"/>
        <end position="276"/>
    </location>
</feature>
<feature type="transmembrane region" description="Helical" evidence="2">
    <location>
        <begin position="46"/>
        <end position="66"/>
    </location>
</feature>
<feature type="transmembrane region" description="Helical" evidence="2">
    <location>
        <begin position="82"/>
        <end position="102"/>
    </location>
</feature>
<feature type="transmembrane region" description="Helical" evidence="2">
    <location>
        <begin position="129"/>
        <end position="149"/>
    </location>
</feature>
<feature type="transmembrane region" description="Helical" evidence="2">
    <location>
        <begin position="159"/>
        <end position="179"/>
    </location>
</feature>
<feature type="transmembrane region" description="Helical" evidence="2">
    <location>
        <begin position="190"/>
        <end position="210"/>
    </location>
</feature>
<feature type="transmembrane region" description="Helical" evidence="2">
    <location>
        <begin position="248"/>
        <end position="268"/>
    </location>
</feature>
<feature type="domain" description="ABC transmembrane type-2" evidence="3">
    <location>
        <begin position="46"/>
        <end position="273"/>
    </location>
</feature>
<name>DRRC_MYCTO</name>
<accession>P9WG20</accession>
<accession>L0TBB3</accession>
<accession>P96207</accession>
<accession>Q7D6E6</accession>